<sequence length="193" mass="20299">MLGLSATGVLVGGLWAWIAPPIHAVVAITRAGERVHEYLGSESQNFFIAPFMLLGLLSVLAVVASALMWQWREHRGPQMVAGLSIGLTTAAAIAAGVGALVVRLRYGALDFDTVPLSRGDHALTYVTQAPPVFFARRPLQIALTLMWPAGIASLVYALLAAGTARDDLGGYPAVDPSSNARTEALETPQAPVS</sequence>
<evidence type="ECO:0000255" key="1"/>
<evidence type="ECO:0000305" key="2"/>
<keyword id="KW-1003">Cell membrane</keyword>
<keyword id="KW-0472">Membrane</keyword>
<keyword id="KW-1185">Reference proteome</keyword>
<keyword id="KW-0812">Transmembrane</keyword>
<keyword id="KW-1133">Transmembrane helix</keyword>
<protein>
    <recommendedName>
        <fullName>Uncharacterized protein Rv1591</fullName>
    </recommendedName>
</protein>
<name>Y1591_MYCTU</name>
<dbReference type="EMBL" id="AL123456">
    <property type="protein sequence ID" value="CCP44355.1"/>
    <property type="status" value="ALT_INIT"/>
    <property type="molecule type" value="Genomic_DNA"/>
</dbReference>
<dbReference type="PIR" id="A70543">
    <property type="entry name" value="A70543"/>
</dbReference>
<dbReference type="RefSeq" id="NP_216107.1">
    <property type="nucleotide sequence ID" value="NC_000962.3"/>
</dbReference>
<dbReference type="STRING" id="83332.Rv1591"/>
<dbReference type="PaxDb" id="83332-Rv1591"/>
<dbReference type="DNASU" id="886295"/>
<dbReference type="GeneID" id="886295"/>
<dbReference type="KEGG" id="mtu:Rv1591"/>
<dbReference type="TubercuList" id="Rv1591"/>
<dbReference type="eggNOG" id="ENOG50325BP">
    <property type="taxonomic scope" value="Bacteria"/>
</dbReference>
<dbReference type="InParanoid" id="P9WLT5"/>
<dbReference type="OrthoDB" id="4761780at2"/>
<dbReference type="Proteomes" id="UP000001584">
    <property type="component" value="Chromosome"/>
</dbReference>
<dbReference type="GO" id="GO:0005576">
    <property type="term" value="C:extracellular region"/>
    <property type="evidence" value="ECO:0007005"/>
    <property type="project" value="MTBBASE"/>
</dbReference>
<dbReference type="GO" id="GO:0005886">
    <property type="term" value="C:plasma membrane"/>
    <property type="evidence" value="ECO:0007005"/>
    <property type="project" value="MTBBASE"/>
</dbReference>
<dbReference type="InterPro" id="IPR021213">
    <property type="entry name" value="DUF2567"/>
</dbReference>
<dbReference type="Pfam" id="PF10821">
    <property type="entry name" value="DUF2567"/>
    <property type="match status" value="1"/>
</dbReference>
<organism>
    <name type="scientific">Mycobacterium tuberculosis (strain ATCC 25618 / H37Rv)</name>
    <dbReference type="NCBI Taxonomy" id="83332"/>
    <lineage>
        <taxon>Bacteria</taxon>
        <taxon>Bacillati</taxon>
        <taxon>Actinomycetota</taxon>
        <taxon>Actinomycetes</taxon>
        <taxon>Mycobacteriales</taxon>
        <taxon>Mycobacteriaceae</taxon>
        <taxon>Mycobacterium</taxon>
        <taxon>Mycobacterium tuberculosis complex</taxon>
    </lineage>
</organism>
<gene>
    <name type="ordered locus">Rv1591</name>
    <name type="ORF">MTCY336.13c</name>
</gene>
<proteinExistence type="evidence at protein level"/>
<reference key="1">
    <citation type="journal article" date="1998" name="Nature">
        <title>Deciphering the biology of Mycobacterium tuberculosis from the complete genome sequence.</title>
        <authorList>
            <person name="Cole S.T."/>
            <person name="Brosch R."/>
            <person name="Parkhill J."/>
            <person name="Garnier T."/>
            <person name="Churcher C.M."/>
            <person name="Harris D.E."/>
            <person name="Gordon S.V."/>
            <person name="Eiglmeier K."/>
            <person name="Gas S."/>
            <person name="Barry C.E. III"/>
            <person name="Tekaia F."/>
            <person name="Badcock K."/>
            <person name="Basham D."/>
            <person name="Brown D."/>
            <person name="Chillingworth T."/>
            <person name="Connor R."/>
            <person name="Davies R.M."/>
            <person name="Devlin K."/>
            <person name="Feltwell T."/>
            <person name="Gentles S."/>
            <person name="Hamlin N."/>
            <person name="Holroyd S."/>
            <person name="Hornsby T."/>
            <person name="Jagels K."/>
            <person name="Krogh A."/>
            <person name="McLean J."/>
            <person name="Moule S."/>
            <person name="Murphy L.D."/>
            <person name="Oliver S."/>
            <person name="Osborne J."/>
            <person name="Quail M.A."/>
            <person name="Rajandream M.A."/>
            <person name="Rogers J."/>
            <person name="Rutter S."/>
            <person name="Seeger K."/>
            <person name="Skelton S."/>
            <person name="Squares S."/>
            <person name="Squares R."/>
            <person name="Sulston J.E."/>
            <person name="Taylor K."/>
            <person name="Whitehead S."/>
            <person name="Barrell B.G."/>
        </authorList>
    </citation>
    <scope>NUCLEOTIDE SEQUENCE [LARGE SCALE GENOMIC DNA]</scope>
    <source>
        <strain>ATCC 25618 / H37Rv</strain>
    </source>
</reference>
<reference key="2">
    <citation type="journal article" date="2011" name="Mol. Cell. Proteomics">
        <title>Proteogenomic analysis of Mycobacterium tuberculosis by high resolution mass spectrometry.</title>
        <authorList>
            <person name="Kelkar D.S."/>
            <person name="Kumar D."/>
            <person name="Kumar P."/>
            <person name="Balakrishnan L."/>
            <person name="Muthusamy B."/>
            <person name="Yadav A.K."/>
            <person name="Shrivastava P."/>
            <person name="Marimuthu A."/>
            <person name="Anand S."/>
            <person name="Sundaram H."/>
            <person name="Kingsbury R."/>
            <person name="Harsha H.C."/>
            <person name="Nair B."/>
            <person name="Prasad T.S."/>
            <person name="Chauhan D.S."/>
            <person name="Katoch K."/>
            <person name="Katoch V.M."/>
            <person name="Kumar P."/>
            <person name="Chaerkady R."/>
            <person name="Ramachandran S."/>
            <person name="Dash D."/>
            <person name="Pandey A."/>
        </authorList>
    </citation>
    <scope>IDENTIFICATION BY MASS SPECTROMETRY [LARGE SCALE ANALYSIS]</scope>
    <source>
        <strain>ATCC 25618 / H37Rv</strain>
    </source>
</reference>
<accession>P9WLT5</accession>
<accession>L0T8P8</accession>
<accession>O06599</accession>
<accession>O52590</accession>
<accession>P0A5F3</accession>
<comment type="subcellular location">
    <subcellularLocation>
        <location evidence="2">Cell membrane</location>
        <topology evidence="2">Multi-pass membrane protein</topology>
    </subcellularLocation>
</comment>
<comment type="similarity">
    <text evidence="2">To M.leprae ML1222.</text>
</comment>
<comment type="sequence caution" evidence="2">
    <conflict type="erroneous initiation">
        <sequence resource="EMBL-CDS" id="CCP44355"/>
    </conflict>
    <text>Extended N-terminus.</text>
</comment>
<feature type="chain" id="PRO_0000103891" description="Uncharacterized protein Rv1591">
    <location>
        <begin position="1"/>
        <end position="193"/>
    </location>
</feature>
<feature type="transmembrane region" description="Helical" evidence="1">
    <location>
        <begin position="8"/>
        <end position="28"/>
    </location>
</feature>
<feature type="transmembrane region" description="Helical" evidence="1">
    <location>
        <begin position="46"/>
        <end position="66"/>
    </location>
</feature>
<feature type="transmembrane region" description="Helical" evidence="1">
    <location>
        <begin position="82"/>
        <end position="102"/>
    </location>
</feature>
<feature type="transmembrane region" description="Helical" evidence="1">
    <location>
        <begin position="141"/>
        <end position="161"/>
    </location>
</feature>